<accession>C3N851</accession>
<dbReference type="EC" id="3.1.1.29" evidence="1"/>
<dbReference type="EMBL" id="CP001403">
    <property type="protein sequence ID" value="ACP46338.1"/>
    <property type="molecule type" value="Genomic_DNA"/>
</dbReference>
<dbReference type="SMR" id="C3N851"/>
<dbReference type="KEGG" id="siy:YG5714_2084"/>
<dbReference type="HOGENOM" id="CLU_073661_2_2_2"/>
<dbReference type="Proteomes" id="UP000002308">
    <property type="component" value="Chromosome"/>
</dbReference>
<dbReference type="GO" id="GO:0005829">
    <property type="term" value="C:cytosol"/>
    <property type="evidence" value="ECO:0007669"/>
    <property type="project" value="TreeGrafter"/>
</dbReference>
<dbReference type="GO" id="GO:0004045">
    <property type="term" value="F:peptidyl-tRNA hydrolase activity"/>
    <property type="evidence" value="ECO:0007669"/>
    <property type="project" value="UniProtKB-UniRule"/>
</dbReference>
<dbReference type="GO" id="GO:0006412">
    <property type="term" value="P:translation"/>
    <property type="evidence" value="ECO:0007669"/>
    <property type="project" value="UniProtKB-UniRule"/>
</dbReference>
<dbReference type="CDD" id="cd02430">
    <property type="entry name" value="PTH2"/>
    <property type="match status" value="1"/>
</dbReference>
<dbReference type="FunFam" id="3.40.1490.10:FF:000001">
    <property type="entry name" value="Peptidyl-tRNA hydrolase 2"/>
    <property type="match status" value="1"/>
</dbReference>
<dbReference type="Gene3D" id="3.40.1490.10">
    <property type="entry name" value="Bit1"/>
    <property type="match status" value="1"/>
</dbReference>
<dbReference type="HAMAP" id="MF_00628">
    <property type="entry name" value="Pept_tRNA_hydro_arch"/>
    <property type="match status" value="1"/>
</dbReference>
<dbReference type="InterPro" id="IPR023476">
    <property type="entry name" value="Pep_tRNA_hydro_II_dom_sf"/>
</dbReference>
<dbReference type="InterPro" id="IPR034759">
    <property type="entry name" value="Pept_tRNA_hydro_arch"/>
</dbReference>
<dbReference type="InterPro" id="IPR002833">
    <property type="entry name" value="PTH2"/>
</dbReference>
<dbReference type="NCBIfam" id="TIGR00283">
    <property type="entry name" value="arch_pth2"/>
    <property type="match status" value="1"/>
</dbReference>
<dbReference type="NCBIfam" id="NF003314">
    <property type="entry name" value="PRK04322.1"/>
    <property type="match status" value="1"/>
</dbReference>
<dbReference type="PANTHER" id="PTHR12649">
    <property type="entry name" value="PEPTIDYL-TRNA HYDROLASE 2"/>
    <property type="match status" value="1"/>
</dbReference>
<dbReference type="PANTHER" id="PTHR12649:SF11">
    <property type="entry name" value="PEPTIDYL-TRNA HYDROLASE 2, MITOCHONDRIAL"/>
    <property type="match status" value="1"/>
</dbReference>
<dbReference type="Pfam" id="PF01981">
    <property type="entry name" value="PTH2"/>
    <property type="match status" value="1"/>
</dbReference>
<dbReference type="SUPFAM" id="SSF102462">
    <property type="entry name" value="Peptidyl-tRNA hydrolase II"/>
    <property type="match status" value="1"/>
</dbReference>
<protein>
    <recommendedName>
        <fullName evidence="1">Peptidyl-tRNA hydrolase</fullName>
        <shortName evidence="1">PTH</shortName>
        <ecNumber evidence="1">3.1.1.29</ecNumber>
    </recommendedName>
</protein>
<comment type="function">
    <text evidence="1">The natural substrate for this enzyme may be peptidyl-tRNAs which drop off the ribosome during protein synthesis.</text>
</comment>
<comment type="catalytic activity">
    <reaction evidence="1">
        <text>an N-acyl-L-alpha-aminoacyl-tRNA + H2O = an N-acyl-L-amino acid + a tRNA + H(+)</text>
        <dbReference type="Rhea" id="RHEA:54448"/>
        <dbReference type="Rhea" id="RHEA-COMP:10123"/>
        <dbReference type="Rhea" id="RHEA-COMP:13883"/>
        <dbReference type="ChEBI" id="CHEBI:15377"/>
        <dbReference type="ChEBI" id="CHEBI:15378"/>
        <dbReference type="ChEBI" id="CHEBI:59874"/>
        <dbReference type="ChEBI" id="CHEBI:78442"/>
        <dbReference type="ChEBI" id="CHEBI:138191"/>
        <dbReference type="EC" id="3.1.1.29"/>
    </reaction>
</comment>
<comment type="subcellular location">
    <subcellularLocation>
        <location evidence="1">Cytoplasm</location>
    </subcellularLocation>
</comment>
<comment type="similarity">
    <text evidence="1">Belongs to the PTH2 family.</text>
</comment>
<sequence length="120" mass="13147">MVKMVIVVRSDIKMGKGKMAAQVAHAAVTLVISIINSNNSRWKEWLNEWLQQGQPKIVVKANSLDEIILRSKKAETMNLPFSIIEDAGKTQLEPGTITCLGIGPAPENLIDPITGDLKLL</sequence>
<keyword id="KW-0963">Cytoplasm</keyword>
<keyword id="KW-0378">Hydrolase</keyword>
<proteinExistence type="inferred from homology"/>
<name>PTH_SACI7</name>
<reference key="1">
    <citation type="journal article" date="2009" name="Proc. Natl. Acad. Sci. U.S.A.">
        <title>Biogeography of the Sulfolobus islandicus pan-genome.</title>
        <authorList>
            <person name="Reno M.L."/>
            <person name="Held N.L."/>
            <person name="Fields C.J."/>
            <person name="Burke P.V."/>
            <person name="Whitaker R.J."/>
        </authorList>
    </citation>
    <scope>NUCLEOTIDE SEQUENCE [LARGE SCALE GENOMIC DNA]</scope>
    <source>
        <strain>Y.G.57.14 / Yellowstone #1</strain>
    </source>
</reference>
<feature type="chain" id="PRO_1000212319" description="Peptidyl-tRNA hydrolase">
    <location>
        <begin position="1"/>
        <end position="120"/>
    </location>
</feature>
<organism>
    <name type="scientific">Saccharolobus islandicus (strain Y.G.57.14 / Yellowstone #1)</name>
    <name type="common">Sulfolobus islandicus</name>
    <dbReference type="NCBI Taxonomy" id="439386"/>
    <lineage>
        <taxon>Archaea</taxon>
        <taxon>Thermoproteota</taxon>
        <taxon>Thermoprotei</taxon>
        <taxon>Sulfolobales</taxon>
        <taxon>Sulfolobaceae</taxon>
        <taxon>Saccharolobus</taxon>
    </lineage>
</organism>
<gene>
    <name evidence="1" type="primary">pth</name>
    <name type="ordered locus">YG5714_2084</name>
</gene>
<evidence type="ECO:0000255" key="1">
    <source>
        <dbReference type="HAMAP-Rule" id="MF_00628"/>
    </source>
</evidence>